<sequence length="172" mass="19663">MAAQAQQIQQKVEYFVAQIDKELSRYPALKKFEQTVPVPKAYAALGAFGIFTLFVFFNIAAGFLTNLLGFFVPAYFSLKALESPQPQDDIQWLTYWVVFGLFTFLETFINIVLYYIPWYYTIKTLAIVWLMLPQTQGAKMVYSRIIRPVFLTTQKTVHQANASTPAAPAETH</sequence>
<organism>
    <name type="scientific">Mycosarcoma maydis</name>
    <name type="common">Corn smut fungus</name>
    <name type="synonym">Ustilago maydis</name>
    <dbReference type="NCBI Taxonomy" id="5270"/>
    <lineage>
        <taxon>Eukaryota</taxon>
        <taxon>Fungi</taxon>
        <taxon>Dikarya</taxon>
        <taxon>Basidiomycota</taxon>
        <taxon>Ustilaginomycotina</taxon>
        <taxon>Ustilaginomycetes</taxon>
        <taxon>Ustilaginales</taxon>
        <taxon>Ustilaginaceae</taxon>
        <taxon>Mycosarcoma</taxon>
    </lineage>
</organism>
<protein>
    <recommendedName>
        <fullName>Protein YOP1</fullName>
    </recommendedName>
</protein>
<comment type="function">
    <text evidence="1">Required to generate and maintain the structure of the tubular endoplasmic reticulum network and the vacuole. Induces high curvature in membranes and causes membrane tubule formation. Involved in membrane/vesicle trafficking.</text>
</comment>
<comment type="subunit">
    <text evidence="1">Oligomer.</text>
</comment>
<comment type="subcellular location">
    <subcellularLocation>
        <location evidence="1">Endoplasmic reticulum membrane</location>
        <topology evidence="1">Multi-pass membrane protein</topology>
    </subcellularLocation>
    <subcellularLocation>
        <location evidence="1">Golgi apparatus membrane</location>
        <topology evidence="2">Multi-pass membrane protein</topology>
    </subcellularLocation>
</comment>
<comment type="domain">
    <text evidence="1">The short lumenal loops between transmembrane domains 1 and 2 and between transmembrane domains 3 and 4 may impart a wedge-like configuration, thus deforming membranes.</text>
</comment>
<comment type="similarity">
    <text evidence="3">Belongs to the DP1 family.</text>
</comment>
<proteinExistence type="inferred from homology"/>
<name>YOP1_MYCMD</name>
<gene>
    <name type="primary">YOP1</name>
    <name type="ORF">UMAG_06393</name>
</gene>
<feature type="chain" id="PRO_0000101857" description="Protein YOP1">
    <location>
        <begin position="1"/>
        <end position="172"/>
    </location>
</feature>
<feature type="topological domain" description="Cytoplasmic" evidence="1">
    <location>
        <begin position="1"/>
        <end position="39"/>
    </location>
</feature>
<feature type="transmembrane region" description="Helical" evidence="1">
    <location>
        <begin position="40"/>
        <end position="59"/>
    </location>
</feature>
<feature type="topological domain" description="Lumenal" evidence="1">
    <location>
        <position position="60"/>
    </location>
</feature>
<feature type="transmembrane region" description="Helical" evidence="1">
    <location>
        <begin position="61"/>
        <end position="80"/>
    </location>
</feature>
<feature type="topological domain" description="Cytoplasmic" evidence="1">
    <location>
        <begin position="81"/>
        <end position="90"/>
    </location>
</feature>
<feature type="transmembrane region" description="Helical" evidence="1">
    <location>
        <begin position="91"/>
        <end position="107"/>
    </location>
</feature>
<feature type="topological domain" description="Lumenal" evidence="1">
    <location>
        <begin position="108"/>
        <end position="110"/>
    </location>
</feature>
<feature type="transmembrane region" description="Helical" evidence="1">
    <location>
        <begin position="111"/>
        <end position="129"/>
    </location>
</feature>
<feature type="topological domain" description="Cytoplasmic" evidence="1">
    <location>
        <begin position="130"/>
        <end position="172"/>
    </location>
</feature>
<dbReference type="EMBL" id="CM003162">
    <property type="protein sequence ID" value="KIS65692.1"/>
    <property type="molecule type" value="Genomic_DNA"/>
</dbReference>
<dbReference type="RefSeq" id="XP_011392679.1">
    <property type="nucleotide sequence ID" value="XM_011394377.1"/>
</dbReference>
<dbReference type="SMR" id="Q4P0H0"/>
<dbReference type="FunCoup" id="Q4P0H0">
    <property type="interactions" value="74"/>
</dbReference>
<dbReference type="EnsemblFungi" id="KIS65692">
    <property type="protein sequence ID" value="KIS65692"/>
    <property type="gene ID" value="UMAG_06393"/>
</dbReference>
<dbReference type="GeneID" id="23565994"/>
<dbReference type="KEGG" id="uma:UMAG_06393"/>
<dbReference type="VEuPathDB" id="FungiDB:UMAG_06393"/>
<dbReference type="eggNOG" id="KOG1725">
    <property type="taxonomic scope" value="Eukaryota"/>
</dbReference>
<dbReference type="HOGENOM" id="CLU_028431_2_1_1"/>
<dbReference type="InParanoid" id="Q4P0H0"/>
<dbReference type="OMA" id="DTQYWVV"/>
<dbReference type="OrthoDB" id="10009287at2759"/>
<dbReference type="Proteomes" id="UP000000561">
    <property type="component" value="Chromosome 23"/>
</dbReference>
<dbReference type="GO" id="GO:0005789">
    <property type="term" value="C:endoplasmic reticulum membrane"/>
    <property type="evidence" value="ECO:0007669"/>
    <property type="project" value="UniProtKB-SubCell"/>
</dbReference>
<dbReference type="GO" id="GO:0000139">
    <property type="term" value="C:Golgi membrane"/>
    <property type="evidence" value="ECO:0007669"/>
    <property type="project" value="UniProtKB-SubCell"/>
</dbReference>
<dbReference type="InterPro" id="IPR004345">
    <property type="entry name" value="TB2_DP1_HVA22"/>
</dbReference>
<dbReference type="PANTHER" id="PTHR12300">
    <property type="entry name" value="HVA22-LIKE PROTEINS"/>
    <property type="match status" value="1"/>
</dbReference>
<dbReference type="PANTHER" id="PTHR12300:SF161">
    <property type="entry name" value="RECEPTOR EXPRESSION-ENHANCING PROTEIN"/>
    <property type="match status" value="1"/>
</dbReference>
<dbReference type="Pfam" id="PF03134">
    <property type="entry name" value="TB2_DP1_HVA22"/>
    <property type="match status" value="1"/>
</dbReference>
<reference key="1">
    <citation type="journal article" date="2006" name="Nature">
        <title>Insights from the genome of the biotrophic fungal plant pathogen Ustilago maydis.</title>
        <authorList>
            <person name="Kaemper J."/>
            <person name="Kahmann R."/>
            <person name="Boelker M."/>
            <person name="Ma L.-J."/>
            <person name="Brefort T."/>
            <person name="Saville B.J."/>
            <person name="Banuett F."/>
            <person name="Kronstad J.W."/>
            <person name="Gold S.E."/>
            <person name="Mueller O."/>
            <person name="Perlin M.H."/>
            <person name="Woesten H.A.B."/>
            <person name="de Vries R."/>
            <person name="Ruiz-Herrera J."/>
            <person name="Reynaga-Pena C.G."/>
            <person name="Snetselaar K."/>
            <person name="McCann M."/>
            <person name="Perez-Martin J."/>
            <person name="Feldbruegge M."/>
            <person name="Basse C.W."/>
            <person name="Steinberg G."/>
            <person name="Ibeas J.I."/>
            <person name="Holloman W."/>
            <person name="Guzman P."/>
            <person name="Farman M.L."/>
            <person name="Stajich J.E."/>
            <person name="Sentandreu R."/>
            <person name="Gonzalez-Prieto J.M."/>
            <person name="Kennell J.C."/>
            <person name="Molina L."/>
            <person name="Schirawski J."/>
            <person name="Mendoza-Mendoza A."/>
            <person name="Greilinger D."/>
            <person name="Muench K."/>
            <person name="Roessel N."/>
            <person name="Scherer M."/>
            <person name="Vranes M."/>
            <person name="Ladendorf O."/>
            <person name="Vincon V."/>
            <person name="Fuchs U."/>
            <person name="Sandrock B."/>
            <person name="Meng S."/>
            <person name="Ho E.C.H."/>
            <person name="Cahill M.J."/>
            <person name="Boyce K.J."/>
            <person name="Klose J."/>
            <person name="Klosterman S.J."/>
            <person name="Deelstra H.J."/>
            <person name="Ortiz-Castellanos L."/>
            <person name="Li W."/>
            <person name="Sanchez-Alonso P."/>
            <person name="Schreier P.H."/>
            <person name="Haeuser-Hahn I."/>
            <person name="Vaupel M."/>
            <person name="Koopmann E."/>
            <person name="Friedrich G."/>
            <person name="Voss H."/>
            <person name="Schlueter T."/>
            <person name="Margolis J."/>
            <person name="Platt D."/>
            <person name="Swimmer C."/>
            <person name="Gnirke A."/>
            <person name="Chen F."/>
            <person name="Vysotskaia V."/>
            <person name="Mannhaupt G."/>
            <person name="Gueldener U."/>
            <person name="Muensterkoetter M."/>
            <person name="Haase D."/>
            <person name="Oesterheld M."/>
            <person name="Mewes H.-W."/>
            <person name="Mauceli E.W."/>
            <person name="DeCaprio D."/>
            <person name="Wade C.M."/>
            <person name="Butler J."/>
            <person name="Young S.K."/>
            <person name="Jaffe D.B."/>
            <person name="Calvo S.E."/>
            <person name="Nusbaum C."/>
            <person name="Galagan J.E."/>
            <person name="Birren B.W."/>
        </authorList>
    </citation>
    <scope>NUCLEOTIDE SEQUENCE [LARGE SCALE GENOMIC DNA]</scope>
    <source>
        <strain>DSM 14603 / FGSC 9021 / UM521</strain>
    </source>
</reference>
<reference key="2">
    <citation type="submission" date="2014-09" db="EMBL/GenBank/DDBJ databases">
        <authorList>
            <person name="Gueldener U."/>
            <person name="Muensterkoetter M."/>
            <person name="Walter M.C."/>
            <person name="Mannhaupt G."/>
            <person name="Kahmann R."/>
        </authorList>
    </citation>
    <scope>GENOME REANNOTATION</scope>
    <source>
        <strain>DSM 14603 / FGSC 9021 / UM521</strain>
    </source>
</reference>
<evidence type="ECO:0000250" key="1">
    <source>
        <dbReference type="UniProtKB" id="Q12402"/>
    </source>
</evidence>
<evidence type="ECO:0000255" key="2"/>
<evidence type="ECO:0000305" key="3"/>
<accession>Q4P0H0</accession>
<accession>A0A0D1BUC3</accession>
<keyword id="KW-0256">Endoplasmic reticulum</keyword>
<keyword id="KW-0333">Golgi apparatus</keyword>
<keyword id="KW-0472">Membrane</keyword>
<keyword id="KW-1185">Reference proteome</keyword>
<keyword id="KW-0812">Transmembrane</keyword>
<keyword id="KW-1133">Transmembrane helix</keyword>